<sequence>MAYKIRKINRNVERRDYTKVSMNLSLPNLIGIQTETFEWFKTKGIQEVLDEFFPILSFDGSSVLTLENWGFKEPRLSVRQAREESKIYDAPIYANLKLSVNKTEEIQKEFDGVDQEDTLKVLTHWLEEKTGNGNITFKQQSQNSYFFEITIKKSEKPDLIQIDIIEDKKTSLICNVSIYKSGEVFLGDFPLMTEAGTFIINGSQKVIVSQLVRSPGAYFNKELNRKTGEMIYFADIIPSRGTWLEYETDSKKIGSDAINPLYVKIDKSRKTTATSLLLAFGISKDDILNIFDNDEVLVETLQQDSIIGDFKIDWSNQVQEIYKKIRQGETATSEGASKFINSILFDKRKYDLTKAGRFKLKQKLSIKNRILNKVIAEDILDANNNVLIAKDTEVTKNNIQEISKILDQDVMSIDLKYLSDIPGNRKVQKIRVYKDSELKTDTTCLIGLTNSSNEEFITVADILSTVSYLLNLKYNIGEIDDIDNLGNRRVRTVGELLQNQFRMGLNRIDKNVKEKLATSDLYKVKTSTIINAKPLTAIIGEFFNLSQLSQFMDQINPLSELTNKRRLTALGPGGLSRDRAGLEVRDVHPSHYGRICPIETPEGPNIGLINNLSTYARVNEYGFITTPYRKVINGIIQNDQVEYLTADQEKNFIIAQSNVNQDENGKILDEIIVSRFNGDDYMAKVEEIHYIDVSPKQIVSVATSGIPFLENDDANRALMGANMQRQAVPLIKPESPIVATGIEFEAARDSGEAIVAKEDAIVKYVDSKTIITDGESGIRTYILSDYERSNNGTSLTQSPIVKVGDVVKKGEIIADGPSMDQGELAIGQNVVVAFSTYNGYNFEDAIVMSERIVIDDRFTSIHIDEYTLEVRNTKQGQEEVTREIPNMSEQAKRHLDAEGIVAIGTEVKVGDVLVGKVTPKGQVQLSPEDKLLHAIFGEKSRNVKDNSLRVPNGGEGIVQSIKRFKAKSALNPDGIELPADIIEVIKVYVVQKRKIQEGDKMSGRHGNKGIISRILPIEDMPHLEDGTPVDIILNPQGVPSRMNIGQILEIHLGMAAKKLNQKVITPVFEGLNEKELEEIMAEAGMTNYGKVTLIDGQTGEPFDKPIAVGVMYMLKLSHMVDDKIHARNVGPYSLITQQPLGGKAQNGGQRFGEMEVWALEAYGAAHTLREILTIKSDDIKGRSKTYEAIVRSKRIPEPGIPESFNVLSKEIMGLGFNMYMIDETGEKSAINAYDKKDFEIDNYDDEILIKTDNLYIDDQDVDAEFEDLTYVDENDILNSFELDNEEE</sequence>
<reference key="1">
    <citation type="submission" date="2005-09" db="EMBL/GenBank/DDBJ databases">
        <authorList>
            <person name="Glass J.I."/>
            <person name="Lartigue C."/>
            <person name="Pfannkoch C."/>
            <person name="Baden-Tillson H."/>
            <person name="Smith H.O."/>
            <person name="Venter J.C."/>
            <person name="Roske K."/>
            <person name="Wise K.S."/>
            <person name="Calcutt M.J."/>
            <person name="Nelson W.C."/>
            <person name="Nierman W.C."/>
        </authorList>
    </citation>
    <scope>NUCLEOTIDE SEQUENCE [LARGE SCALE GENOMIC DNA]</scope>
    <source>
        <strain>California kid / ATCC 27343 / NCTC 10154</strain>
    </source>
</reference>
<proteinExistence type="inferred from homology"/>
<organism>
    <name type="scientific">Mycoplasma capricolum subsp. capricolum (strain California kid / ATCC 27343 / NCTC 10154)</name>
    <dbReference type="NCBI Taxonomy" id="340047"/>
    <lineage>
        <taxon>Bacteria</taxon>
        <taxon>Bacillati</taxon>
        <taxon>Mycoplasmatota</taxon>
        <taxon>Mollicutes</taxon>
        <taxon>Mycoplasmataceae</taxon>
        <taxon>Mycoplasma</taxon>
    </lineage>
</organism>
<accession>Q2ST48</accession>
<gene>
    <name evidence="1" type="primary">rpoB</name>
    <name type="ordered locus">MCAP_0070</name>
</gene>
<dbReference type="EC" id="2.7.7.6" evidence="1"/>
<dbReference type="EMBL" id="CP000123">
    <property type="protein sequence ID" value="ABC01305.1"/>
    <property type="molecule type" value="Genomic_DNA"/>
</dbReference>
<dbReference type="RefSeq" id="WP_011386970.1">
    <property type="nucleotide sequence ID" value="NC_007633.1"/>
</dbReference>
<dbReference type="SMR" id="Q2ST48"/>
<dbReference type="GeneID" id="23778975"/>
<dbReference type="KEGG" id="mcp:MCAP_0070"/>
<dbReference type="HOGENOM" id="CLU_000524_4_1_14"/>
<dbReference type="PhylomeDB" id="Q2ST48"/>
<dbReference type="Proteomes" id="UP000001928">
    <property type="component" value="Chromosome"/>
</dbReference>
<dbReference type="GO" id="GO:0000428">
    <property type="term" value="C:DNA-directed RNA polymerase complex"/>
    <property type="evidence" value="ECO:0007669"/>
    <property type="project" value="UniProtKB-KW"/>
</dbReference>
<dbReference type="GO" id="GO:0003677">
    <property type="term" value="F:DNA binding"/>
    <property type="evidence" value="ECO:0007669"/>
    <property type="project" value="UniProtKB-UniRule"/>
</dbReference>
<dbReference type="GO" id="GO:0003899">
    <property type="term" value="F:DNA-directed RNA polymerase activity"/>
    <property type="evidence" value="ECO:0007669"/>
    <property type="project" value="UniProtKB-UniRule"/>
</dbReference>
<dbReference type="GO" id="GO:0032549">
    <property type="term" value="F:ribonucleoside binding"/>
    <property type="evidence" value="ECO:0007669"/>
    <property type="project" value="InterPro"/>
</dbReference>
<dbReference type="GO" id="GO:0006351">
    <property type="term" value="P:DNA-templated transcription"/>
    <property type="evidence" value="ECO:0007669"/>
    <property type="project" value="UniProtKB-UniRule"/>
</dbReference>
<dbReference type="CDD" id="cd00653">
    <property type="entry name" value="RNA_pol_B_RPB2"/>
    <property type="match status" value="1"/>
</dbReference>
<dbReference type="Gene3D" id="2.40.50.100">
    <property type="match status" value="1"/>
</dbReference>
<dbReference type="Gene3D" id="2.40.50.150">
    <property type="match status" value="1"/>
</dbReference>
<dbReference type="Gene3D" id="3.90.1100.10">
    <property type="match status" value="3"/>
</dbReference>
<dbReference type="Gene3D" id="2.30.150.10">
    <property type="entry name" value="DNA-directed RNA polymerase, beta subunit, external 1 domain"/>
    <property type="match status" value="1"/>
</dbReference>
<dbReference type="Gene3D" id="2.40.270.10">
    <property type="entry name" value="DNA-directed RNA polymerase, subunit 2, domain 6"/>
    <property type="match status" value="2"/>
</dbReference>
<dbReference type="Gene3D" id="3.90.1800.10">
    <property type="entry name" value="RNA polymerase alpha subunit dimerisation domain"/>
    <property type="match status" value="1"/>
</dbReference>
<dbReference type="Gene3D" id="3.90.1110.10">
    <property type="entry name" value="RNA polymerase Rpb2, domain 2"/>
    <property type="match status" value="2"/>
</dbReference>
<dbReference type="HAMAP" id="MF_01321">
    <property type="entry name" value="RNApol_bact_RpoB"/>
    <property type="match status" value="1"/>
</dbReference>
<dbReference type="InterPro" id="IPR042107">
    <property type="entry name" value="DNA-dir_RNA_pol_bsu_ext_1_sf"/>
</dbReference>
<dbReference type="InterPro" id="IPR019462">
    <property type="entry name" value="DNA-dir_RNA_pol_bsu_external_1"/>
</dbReference>
<dbReference type="InterPro" id="IPR015712">
    <property type="entry name" value="DNA-dir_RNA_pol_su2"/>
</dbReference>
<dbReference type="InterPro" id="IPR007120">
    <property type="entry name" value="DNA-dir_RNAP_su2_dom"/>
</dbReference>
<dbReference type="InterPro" id="IPR037033">
    <property type="entry name" value="DNA-dir_RNAP_su2_hyb_sf"/>
</dbReference>
<dbReference type="InterPro" id="IPR010243">
    <property type="entry name" value="RNA_pol_bsu_bac"/>
</dbReference>
<dbReference type="InterPro" id="IPR007121">
    <property type="entry name" value="RNA_pol_bsu_CS"/>
</dbReference>
<dbReference type="InterPro" id="IPR007644">
    <property type="entry name" value="RNA_pol_bsu_protrusion"/>
</dbReference>
<dbReference type="InterPro" id="IPR007642">
    <property type="entry name" value="RNA_pol_Rpb2_2"/>
</dbReference>
<dbReference type="InterPro" id="IPR037034">
    <property type="entry name" value="RNA_pol_Rpb2_2_sf"/>
</dbReference>
<dbReference type="InterPro" id="IPR007645">
    <property type="entry name" value="RNA_pol_Rpb2_3"/>
</dbReference>
<dbReference type="InterPro" id="IPR007641">
    <property type="entry name" value="RNA_pol_Rpb2_7"/>
</dbReference>
<dbReference type="InterPro" id="IPR014724">
    <property type="entry name" value="RNA_pol_RPB2_OB-fold"/>
</dbReference>
<dbReference type="NCBIfam" id="NF001616">
    <property type="entry name" value="PRK00405.1"/>
    <property type="match status" value="1"/>
</dbReference>
<dbReference type="NCBIfam" id="TIGR02013">
    <property type="entry name" value="rpoB"/>
    <property type="match status" value="1"/>
</dbReference>
<dbReference type="PANTHER" id="PTHR20856">
    <property type="entry name" value="DNA-DIRECTED RNA POLYMERASE I SUBUNIT 2"/>
    <property type="match status" value="1"/>
</dbReference>
<dbReference type="Pfam" id="PF04563">
    <property type="entry name" value="RNA_pol_Rpb2_1"/>
    <property type="match status" value="1"/>
</dbReference>
<dbReference type="Pfam" id="PF04561">
    <property type="entry name" value="RNA_pol_Rpb2_2"/>
    <property type="match status" value="2"/>
</dbReference>
<dbReference type="Pfam" id="PF04565">
    <property type="entry name" value="RNA_pol_Rpb2_3"/>
    <property type="match status" value="1"/>
</dbReference>
<dbReference type="Pfam" id="PF10385">
    <property type="entry name" value="RNA_pol_Rpb2_45"/>
    <property type="match status" value="1"/>
</dbReference>
<dbReference type="Pfam" id="PF00562">
    <property type="entry name" value="RNA_pol_Rpb2_6"/>
    <property type="match status" value="1"/>
</dbReference>
<dbReference type="Pfam" id="PF04560">
    <property type="entry name" value="RNA_pol_Rpb2_7"/>
    <property type="match status" value="1"/>
</dbReference>
<dbReference type="SUPFAM" id="SSF64484">
    <property type="entry name" value="beta and beta-prime subunits of DNA dependent RNA-polymerase"/>
    <property type="match status" value="1"/>
</dbReference>
<dbReference type="PROSITE" id="PS01166">
    <property type="entry name" value="RNA_POL_BETA"/>
    <property type="match status" value="1"/>
</dbReference>
<name>RPOB_MYCCT</name>
<keyword id="KW-0240">DNA-directed RNA polymerase</keyword>
<keyword id="KW-0548">Nucleotidyltransferase</keyword>
<keyword id="KW-0804">Transcription</keyword>
<keyword id="KW-0808">Transferase</keyword>
<protein>
    <recommendedName>
        <fullName evidence="1">DNA-directed RNA polymerase subunit beta</fullName>
        <shortName evidence="1">RNAP subunit beta</shortName>
        <ecNumber evidence="1">2.7.7.6</ecNumber>
    </recommendedName>
    <alternativeName>
        <fullName evidence="1">RNA polymerase subunit beta</fullName>
    </alternativeName>
    <alternativeName>
        <fullName evidence="1">Transcriptase subunit beta</fullName>
    </alternativeName>
</protein>
<evidence type="ECO:0000255" key="1">
    <source>
        <dbReference type="HAMAP-Rule" id="MF_01321"/>
    </source>
</evidence>
<comment type="function">
    <text evidence="1">DNA-dependent RNA polymerase catalyzes the transcription of DNA into RNA using the four ribonucleoside triphosphates as substrates.</text>
</comment>
<comment type="catalytic activity">
    <reaction evidence="1">
        <text>RNA(n) + a ribonucleoside 5'-triphosphate = RNA(n+1) + diphosphate</text>
        <dbReference type="Rhea" id="RHEA:21248"/>
        <dbReference type="Rhea" id="RHEA-COMP:14527"/>
        <dbReference type="Rhea" id="RHEA-COMP:17342"/>
        <dbReference type="ChEBI" id="CHEBI:33019"/>
        <dbReference type="ChEBI" id="CHEBI:61557"/>
        <dbReference type="ChEBI" id="CHEBI:140395"/>
        <dbReference type="EC" id="2.7.7.6"/>
    </reaction>
</comment>
<comment type="subunit">
    <text evidence="1">The RNAP catalytic core consists of 2 alpha, 1 beta, 1 beta' and 1 omega subunit. When a sigma factor is associated with the core the holoenzyme is formed, which can initiate transcription.</text>
</comment>
<comment type="similarity">
    <text evidence="1">Belongs to the RNA polymerase beta chain family.</text>
</comment>
<feature type="chain" id="PRO_0000237305" description="DNA-directed RNA polymerase subunit beta">
    <location>
        <begin position="1"/>
        <end position="1287"/>
    </location>
</feature>